<accession>C3KVX5</accession>
<keyword id="KW-0028">Amino-acid biosynthesis</keyword>
<keyword id="KW-0032">Aminotransferase</keyword>
<keyword id="KW-0368">Histidine biosynthesis</keyword>
<keyword id="KW-0663">Pyridoxal phosphate</keyword>
<keyword id="KW-0808">Transferase</keyword>
<proteinExistence type="inferred from homology"/>
<gene>
    <name evidence="1" type="primary">hisC</name>
    <name type="ordered locus">CLJ_B1678</name>
</gene>
<evidence type="ECO:0000255" key="1">
    <source>
        <dbReference type="HAMAP-Rule" id="MF_01023"/>
    </source>
</evidence>
<organism>
    <name type="scientific">Clostridium botulinum (strain 657 / Type Ba4)</name>
    <dbReference type="NCBI Taxonomy" id="515621"/>
    <lineage>
        <taxon>Bacteria</taxon>
        <taxon>Bacillati</taxon>
        <taxon>Bacillota</taxon>
        <taxon>Clostridia</taxon>
        <taxon>Eubacteriales</taxon>
        <taxon>Clostridiaceae</taxon>
        <taxon>Clostridium</taxon>
    </lineage>
</organism>
<reference key="1">
    <citation type="submission" date="2008-05" db="EMBL/GenBank/DDBJ databases">
        <title>Genome sequence of Clostridium botulinum Ba4 strain 657.</title>
        <authorList>
            <person name="Shrivastava S."/>
            <person name="Brown J.L."/>
            <person name="Bruce D."/>
            <person name="Detter C."/>
            <person name="Munk C."/>
            <person name="Smith L.A."/>
            <person name="Smith T.J."/>
            <person name="Sutton G."/>
            <person name="Brettin T.S."/>
        </authorList>
    </citation>
    <scope>NUCLEOTIDE SEQUENCE [LARGE SCALE GENOMIC DNA]</scope>
    <source>
        <strain>657 / Type Ba4</strain>
    </source>
</reference>
<name>HIS8_CLOB6</name>
<comment type="catalytic activity">
    <reaction evidence="1">
        <text>L-histidinol phosphate + 2-oxoglutarate = 3-(imidazol-4-yl)-2-oxopropyl phosphate + L-glutamate</text>
        <dbReference type="Rhea" id="RHEA:23744"/>
        <dbReference type="ChEBI" id="CHEBI:16810"/>
        <dbReference type="ChEBI" id="CHEBI:29985"/>
        <dbReference type="ChEBI" id="CHEBI:57766"/>
        <dbReference type="ChEBI" id="CHEBI:57980"/>
        <dbReference type="EC" id="2.6.1.9"/>
    </reaction>
</comment>
<comment type="cofactor">
    <cofactor evidence="1">
        <name>pyridoxal 5'-phosphate</name>
        <dbReference type="ChEBI" id="CHEBI:597326"/>
    </cofactor>
</comment>
<comment type="pathway">
    <text evidence="1">Amino-acid biosynthesis; L-histidine biosynthesis; L-histidine from 5-phospho-alpha-D-ribose 1-diphosphate: step 7/9.</text>
</comment>
<comment type="subunit">
    <text evidence="1">Homodimer.</text>
</comment>
<comment type="similarity">
    <text evidence="1">Belongs to the class-II pyridoxal-phosphate-dependent aminotransferase family. Histidinol-phosphate aminotransferase subfamily.</text>
</comment>
<dbReference type="EC" id="2.6.1.9" evidence="1"/>
<dbReference type="EMBL" id="CP001083">
    <property type="protein sequence ID" value="ACQ54536.1"/>
    <property type="molecule type" value="Genomic_DNA"/>
</dbReference>
<dbReference type="RefSeq" id="WP_012721254.1">
    <property type="nucleotide sequence ID" value="NC_012658.1"/>
</dbReference>
<dbReference type="SMR" id="C3KVX5"/>
<dbReference type="KEGG" id="cbi:CLJ_B1678"/>
<dbReference type="HOGENOM" id="CLU_017584_3_0_9"/>
<dbReference type="UniPathway" id="UPA00031">
    <property type="reaction ID" value="UER00012"/>
</dbReference>
<dbReference type="Proteomes" id="UP000002333">
    <property type="component" value="Chromosome"/>
</dbReference>
<dbReference type="GO" id="GO:0004400">
    <property type="term" value="F:histidinol-phosphate transaminase activity"/>
    <property type="evidence" value="ECO:0007669"/>
    <property type="project" value="UniProtKB-UniRule"/>
</dbReference>
<dbReference type="GO" id="GO:0030170">
    <property type="term" value="F:pyridoxal phosphate binding"/>
    <property type="evidence" value="ECO:0007669"/>
    <property type="project" value="InterPro"/>
</dbReference>
<dbReference type="GO" id="GO:0000105">
    <property type="term" value="P:L-histidine biosynthetic process"/>
    <property type="evidence" value="ECO:0007669"/>
    <property type="project" value="UniProtKB-UniRule"/>
</dbReference>
<dbReference type="CDD" id="cd00609">
    <property type="entry name" value="AAT_like"/>
    <property type="match status" value="1"/>
</dbReference>
<dbReference type="Gene3D" id="3.90.1150.10">
    <property type="entry name" value="Aspartate Aminotransferase, domain 1"/>
    <property type="match status" value="1"/>
</dbReference>
<dbReference type="Gene3D" id="3.40.640.10">
    <property type="entry name" value="Type I PLP-dependent aspartate aminotransferase-like (Major domain)"/>
    <property type="match status" value="1"/>
</dbReference>
<dbReference type="HAMAP" id="MF_01023">
    <property type="entry name" value="HisC_aminotrans_2"/>
    <property type="match status" value="1"/>
</dbReference>
<dbReference type="InterPro" id="IPR001917">
    <property type="entry name" value="Aminotrans_II_pyridoxalP_BS"/>
</dbReference>
<dbReference type="InterPro" id="IPR004839">
    <property type="entry name" value="Aminotransferase_I/II_large"/>
</dbReference>
<dbReference type="InterPro" id="IPR005861">
    <property type="entry name" value="HisP_aminotrans"/>
</dbReference>
<dbReference type="InterPro" id="IPR050106">
    <property type="entry name" value="HistidinolP_aminotransfase"/>
</dbReference>
<dbReference type="InterPro" id="IPR015424">
    <property type="entry name" value="PyrdxlP-dep_Trfase"/>
</dbReference>
<dbReference type="InterPro" id="IPR015421">
    <property type="entry name" value="PyrdxlP-dep_Trfase_major"/>
</dbReference>
<dbReference type="InterPro" id="IPR015422">
    <property type="entry name" value="PyrdxlP-dep_Trfase_small"/>
</dbReference>
<dbReference type="NCBIfam" id="TIGR01141">
    <property type="entry name" value="hisC"/>
    <property type="match status" value="1"/>
</dbReference>
<dbReference type="PANTHER" id="PTHR43643:SF3">
    <property type="entry name" value="HISTIDINOL-PHOSPHATE AMINOTRANSFERASE"/>
    <property type="match status" value="1"/>
</dbReference>
<dbReference type="PANTHER" id="PTHR43643">
    <property type="entry name" value="HISTIDINOL-PHOSPHATE AMINOTRANSFERASE 2"/>
    <property type="match status" value="1"/>
</dbReference>
<dbReference type="Pfam" id="PF00155">
    <property type="entry name" value="Aminotran_1_2"/>
    <property type="match status" value="1"/>
</dbReference>
<dbReference type="SUPFAM" id="SSF53383">
    <property type="entry name" value="PLP-dependent transferases"/>
    <property type="match status" value="1"/>
</dbReference>
<dbReference type="PROSITE" id="PS00599">
    <property type="entry name" value="AA_TRANSFER_CLASS_2"/>
    <property type="match status" value="1"/>
</dbReference>
<sequence length="354" mass="40494">MSKYWSNITKNIEPYVCGEQPKNKKIIKLNTNENPYPPSPKVLQAIKNAARDDLRLYPDPNCDALRKTIANYYNLSKEEVFIGNGSDEILAFSFLTFFNPEETVVFSDISYSFYPVYANLYKLDYKLAKLREDFSIDINDFKNAKGGAVITNPNAPTGVYLSLDSVKQILEDNVNKVVIVDEAYIDFGGESSVSLIKDYPNLLVIQTLSKSRSLAGMRIGFALGQKELIKGLNRIKNSFNSYTIDRISSLAAIESIKDEEYFKECTSKVIKTRNWTINELGKIGFKVIPSKANFIFITYDTYEAKNIFVKLKDENVLVRYFNKYRISNYLRVSIGSKEEMVIFIDKIKEIINKL</sequence>
<feature type="chain" id="PRO_1000213305" description="Histidinol-phosphate aminotransferase">
    <location>
        <begin position="1"/>
        <end position="354"/>
    </location>
</feature>
<feature type="modified residue" description="N6-(pyridoxal phosphate)lysine" evidence="1">
    <location>
        <position position="210"/>
    </location>
</feature>
<protein>
    <recommendedName>
        <fullName evidence="1">Histidinol-phosphate aminotransferase</fullName>
        <ecNumber evidence="1">2.6.1.9</ecNumber>
    </recommendedName>
    <alternativeName>
        <fullName evidence="1">Imidazole acetol-phosphate transaminase</fullName>
    </alternativeName>
</protein>